<comment type="subcellular location">
    <subcellularLocation>
        <location evidence="2">Cell membrane</location>
        <topology evidence="2">Multi-pass membrane protein</topology>
    </subcellularLocation>
</comment>
<comment type="similarity">
    <text evidence="2">Belongs to the UPF0382 family.</text>
</comment>
<comment type="sequence caution" evidence="2">
    <conflict type="erroneous initiation">
        <sequence resource="EMBL-CDS" id="BAE19277"/>
    </conflict>
</comment>
<name>Y2132_STAS1</name>
<accession>Q49VD3</accession>
<proteinExistence type="inferred from homology"/>
<gene>
    <name type="ordered locus">SSP2132</name>
</gene>
<protein>
    <recommendedName>
        <fullName>UPF0382 membrane protein SSP2132</fullName>
    </recommendedName>
</protein>
<evidence type="ECO:0000255" key="1"/>
<evidence type="ECO:0000305" key="2"/>
<reference key="1">
    <citation type="journal article" date="2005" name="Proc. Natl. Acad. Sci. U.S.A.">
        <title>Whole genome sequence of Staphylococcus saprophyticus reveals the pathogenesis of uncomplicated urinary tract infection.</title>
        <authorList>
            <person name="Kuroda M."/>
            <person name="Yamashita A."/>
            <person name="Hirakawa H."/>
            <person name="Kumano M."/>
            <person name="Morikawa K."/>
            <person name="Higashide M."/>
            <person name="Maruyama A."/>
            <person name="Inose Y."/>
            <person name="Matoba K."/>
            <person name="Toh H."/>
            <person name="Kuhara S."/>
            <person name="Hattori M."/>
            <person name="Ohta T."/>
        </authorList>
    </citation>
    <scope>NUCLEOTIDE SEQUENCE [LARGE SCALE GENOMIC DNA]</scope>
    <source>
        <strain>ATCC 15305 / DSM 20229 / NCIMB 8711 / NCTC 7292 / S-41</strain>
    </source>
</reference>
<dbReference type="EMBL" id="AP008934">
    <property type="protein sequence ID" value="BAE19277.1"/>
    <property type="status" value="ALT_INIT"/>
    <property type="molecule type" value="Genomic_DNA"/>
</dbReference>
<dbReference type="RefSeq" id="WP_103314637.1">
    <property type="nucleotide sequence ID" value="NC_007350.1"/>
</dbReference>
<dbReference type="GeneID" id="3616340"/>
<dbReference type="KEGG" id="ssp:SSP2132"/>
<dbReference type="eggNOG" id="COG2363">
    <property type="taxonomic scope" value="Bacteria"/>
</dbReference>
<dbReference type="HOGENOM" id="CLU_096548_3_3_9"/>
<dbReference type="OrthoDB" id="9802121at2"/>
<dbReference type="Proteomes" id="UP000006371">
    <property type="component" value="Chromosome"/>
</dbReference>
<dbReference type="GO" id="GO:0005886">
    <property type="term" value="C:plasma membrane"/>
    <property type="evidence" value="ECO:0007669"/>
    <property type="project" value="UniProtKB-SubCell"/>
</dbReference>
<dbReference type="InterPro" id="IPR006696">
    <property type="entry name" value="DUF423"/>
</dbReference>
<dbReference type="PANTHER" id="PTHR43461">
    <property type="entry name" value="TRANSMEMBRANE PROTEIN 256"/>
    <property type="match status" value="1"/>
</dbReference>
<dbReference type="PANTHER" id="PTHR43461:SF1">
    <property type="entry name" value="TRANSMEMBRANE PROTEIN 256"/>
    <property type="match status" value="1"/>
</dbReference>
<dbReference type="Pfam" id="PF04241">
    <property type="entry name" value="DUF423"/>
    <property type="match status" value="1"/>
</dbReference>
<organism>
    <name type="scientific">Staphylococcus saprophyticus subsp. saprophyticus (strain ATCC 15305 / DSM 20229 / NCIMB 8711 / NCTC 7292 / S-41)</name>
    <dbReference type="NCBI Taxonomy" id="342451"/>
    <lineage>
        <taxon>Bacteria</taxon>
        <taxon>Bacillati</taxon>
        <taxon>Bacillota</taxon>
        <taxon>Bacilli</taxon>
        <taxon>Bacillales</taxon>
        <taxon>Staphylococcaceae</taxon>
        <taxon>Staphylococcus</taxon>
    </lineage>
</organism>
<keyword id="KW-1003">Cell membrane</keyword>
<keyword id="KW-0472">Membrane</keyword>
<keyword id="KW-1185">Reference proteome</keyword>
<keyword id="KW-0812">Transmembrane</keyword>
<keyword id="KW-1133">Transmembrane helix</keyword>
<feature type="chain" id="PRO_0000249041" description="UPF0382 membrane protein SSP2132">
    <location>
        <begin position="1"/>
        <end position="120"/>
    </location>
</feature>
<feature type="transmembrane region" description="Helical" evidence="1">
    <location>
        <begin position="3"/>
        <end position="23"/>
    </location>
</feature>
<feature type="transmembrane region" description="Helical" evidence="1">
    <location>
        <begin position="46"/>
        <end position="66"/>
    </location>
</feature>
<feature type="transmembrane region" description="Helical" evidence="1">
    <location>
        <begin position="69"/>
        <end position="89"/>
    </location>
</feature>
<feature type="transmembrane region" description="Helical" evidence="1">
    <location>
        <begin position="94"/>
        <end position="114"/>
    </location>
</feature>
<sequence length="120" mass="12914">MKVFIILGALNAMMAVGTGAFGAHGLENKLSAKYLSVWEKATTYQMYHGLGLLAIGIISGTTSINVNWVGWLLFFGIVFFSGSLYILALTQIRIIGAITPIGGVLFIVGWLMLVIGTFKI</sequence>